<keyword id="KW-0963">Cytoplasm</keyword>
<keyword id="KW-0275">Fatty acid biosynthesis</keyword>
<keyword id="KW-0276">Fatty acid metabolism</keyword>
<keyword id="KW-0444">Lipid biosynthesis</keyword>
<keyword id="KW-0443">Lipid metabolism</keyword>
<keyword id="KW-0460">Magnesium</keyword>
<keyword id="KW-0479">Metal-binding</keyword>
<keyword id="KW-1185">Reference proteome</keyword>
<keyword id="KW-0808">Transferase</keyword>
<comment type="function">
    <text evidence="1">Transfers the 4'-phosphopantetheine moiety from coenzyme A to a Ser of acyl-carrier-protein.</text>
</comment>
<comment type="catalytic activity">
    <reaction evidence="1">
        <text>apo-[ACP] + CoA = holo-[ACP] + adenosine 3',5'-bisphosphate + H(+)</text>
        <dbReference type="Rhea" id="RHEA:12068"/>
        <dbReference type="Rhea" id="RHEA-COMP:9685"/>
        <dbReference type="Rhea" id="RHEA-COMP:9690"/>
        <dbReference type="ChEBI" id="CHEBI:15378"/>
        <dbReference type="ChEBI" id="CHEBI:29999"/>
        <dbReference type="ChEBI" id="CHEBI:57287"/>
        <dbReference type="ChEBI" id="CHEBI:58343"/>
        <dbReference type="ChEBI" id="CHEBI:64479"/>
        <dbReference type="EC" id="2.7.8.7"/>
    </reaction>
</comment>
<comment type="cofactor">
    <cofactor evidence="1">
        <name>Mg(2+)</name>
        <dbReference type="ChEBI" id="CHEBI:18420"/>
    </cofactor>
</comment>
<comment type="subcellular location">
    <subcellularLocation>
        <location evidence="1">Cytoplasm</location>
    </subcellularLocation>
</comment>
<comment type="similarity">
    <text evidence="1">Belongs to the P-Pant transferase superfamily. AcpS family.</text>
</comment>
<proteinExistence type="inferred from homology"/>
<name>ACPS_NITEU</name>
<reference key="1">
    <citation type="journal article" date="2003" name="J. Bacteriol.">
        <title>Complete genome sequence of the ammonia-oxidizing bacterium and obligate chemolithoautotroph Nitrosomonas europaea.</title>
        <authorList>
            <person name="Chain P."/>
            <person name="Lamerdin J.E."/>
            <person name="Larimer F.W."/>
            <person name="Regala W."/>
            <person name="Lao V."/>
            <person name="Land M.L."/>
            <person name="Hauser L."/>
            <person name="Hooper A.B."/>
            <person name="Klotz M.G."/>
            <person name="Norton J."/>
            <person name="Sayavedra-Soto L.A."/>
            <person name="Arciero D.M."/>
            <person name="Hommes N.G."/>
            <person name="Whittaker M.M."/>
            <person name="Arp D.J."/>
        </authorList>
    </citation>
    <scope>NUCLEOTIDE SEQUENCE [LARGE SCALE GENOMIC DNA]</scope>
    <source>
        <strain>ATCC 19718 / CIP 103999 / KCTC 2705 / NBRC 14298</strain>
    </source>
</reference>
<organism>
    <name type="scientific">Nitrosomonas europaea (strain ATCC 19718 / CIP 103999 / KCTC 2705 / NBRC 14298)</name>
    <dbReference type="NCBI Taxonomy" id="228410"/>
    <lineage>
        <taxon>Bacteria</taxon>
        <taxon>Pseudomonadati</taxon>
        <taxon>Pseudomonadota</taxon>
        <taxon>Betaproteobacteria</taxon>
        <taxon>Nitrosomonadales</taxon>
        <taxon>Nitrosomonadaceae</taxon>
        <taxon>Nitrosomonas</taxon>
    </lineage>
</organism>
<gene>
    <name evidence="1" type="primary">acpS</name>
    <name type="ordered locus">NE2321</name>
</gene>
<sequence length="125" mass="14104">MIYGIGTDLVDPARIASSLERYGEQFARRVLADSEWPDYLEHIKPALFLAKRFAAKEAFSKATGTGLRAPVMFGNMAVQHDSQGKPYFEFQQELAEWIGQRGITRHHLSISDELTMVSAFVVLEK</sequence>
<accession>Q820I1</accession>
<evidence type="ECO:0000255" key="1">
    <source>
        <dbReference type="HAMAP-Rule" id="MF_00101"/>
    </source>
</evidence>
<feature type="chain" id="PRO_0000175679" description="Holo-[acyl-carrier-protein] synthase">
    <location>
        <begin position="1"/>
        <end position="125"/>
    </location>
</feature>
<feature type="binding site" evidence="1">
    <location>
        <position position="8"/>
    </location>
    <ligand>
        <name>Mg(2+)</name>
        <dbReference type="ChEBI" id="CHEBI:18420"/>
    </ligand>
</feature>
<feature type="binding site" evidence="1">
    <location>
        <position position="57"/>
    </location>
    <ligand>
        <name>Mg(2+)</name>
        <dbReference type="ChEBI" id="CHEBI:18420"/>
    </ligand>
</feature>
<protein>
    <recommendedName>
        <fullName evidence="1">Holo-[acyl-carrier-protein] synthase</fullName>
        <shortName evidence="1">Holo-ACP synthase</shortName>
        <ecNumber evidence="1">2.7.8.7</ecNumber>
    </recommendedName>
    <alternativeName>
        <fullName evidence="1">4'-phosphopantetheinyl transferase AcpS</fullName>
    </alternativeName>
</protein>
<dbReference type="EC" id="2.7.8.7" evidence="1"/>
<dbReference type="EMBL" id="AL954747">
    <property type="protein sequence ID" value="CAD86233.1"/>
    <property type="molecule type" value="Genomic_DNA"/>
</dbReference>
<dbReference type="RefSeq" id="WP_011112805.1">
    <property type="nucleotide sequence ID" value="NC_004757.1"/>
</dbReference>
<dbReference type="SMR" id="Q820I1"/>
<dbReference type="STRING" id="228410.NE2321"/>
<dbReference type="GeneID" id="87105452"/>
<dbReference type="KEGG" id="neu:NE2321"/>
<dbReference type="eggNOG" id="COG0736">
    <property type="taxonomic scope" value="Bacteria"/>
</dbReference>
<dbReference type="HOGENOM" id="CLU_089696_3_1_4"/>
<dbReference type="OrthoDB" id="517356at2"/>
<dbReference type="PhylomeDB" id="Q820I1"/>
<dbReference type="Proteomes" id="UP000001416">
    <property type="component" value="Chromosome"/>
</dbReference>
<dbReference type="GO" id="GO:0005737">
    <property type="term" value="C:cytoplasm"/>
    <property type="evidence" value="ECO:0007669"/>
    <property type="project" value="UniProtKB-SubCell"/>
</dbReference>
<dbReference type="GO" id="GO:0008897">
    <property type="term" value="F:holo-[acyl-carrier-protein] synthase activity"/>
    <property type="evidence" value="ECO:0007669"/>
    <property type="project" value="UniProtKB-UniRule"/>
</dbReference>
<dbReference type="GO" id="GO:0000287">
    <property type="term" value="F:magnesium ion binding"/>
    <property type="evidence" value="ECO:0007669"/>
    <property type="project" value="UniProtKB-UniRule"/>
</dbReference>
<dbReference type="GO" id="GO:0006633">
    <property type="term" value="P:fatty acid biosynthetic process"/>
    <property type="evidence" value="ECO:0007669"/>
    <property type="project" value="UniProtKB-UniRule"/>
</dbReference>
<dbReference type="Gene3D" id="3.90.470.20">
    <property type="entry name" value="4'-phosphopantetheinyl transferase domain"/>
    <property type="match status" value="1"/>
</dbReference>
<dbReference type="HAMAP" id="MF_00101">
    <property type="entry name" value="AcpS"/>
    <property type="match status" value="1"/>
</dbReference>
<dbReference type="InterPro" id="IPR008278">
    <property type="entry name" value="4-PPantetheinyl_Trfase_dom"/>
</dbReference>
<dbReference type="InterPro" id="IPR037143">
    <property type="entry name" value="4-PPantetheinyl_Trfase_dom_sf"/>
</dbReference>
<dbReference type="InterPro" id="IPR002582">
    <property type="entry name" value="ACPS"/>
</dbReference>
<dbReference type="InterPro" id="IPR004568">
    <property type="entry name" value="Ppantetheine-prot_Trfase_dom"/>
</dbReference>
<dbReference type="NCBIfam" id="TIGR00516">
    <property type="entry name" value="acpS"/>
    <property type="match status" value="1"/>
</dbReference>
<dbReference type="NCBIfam" id="TIGR00556">
    <property type="entry name" value="pantethn_trn"/>
    <property type="match status" value="1"/>
</dbReference>
<dbReference type="Pfam" id="PF01648">
    <property type="entry name" value="ACPS"/>
    <property type="match status" value="1"/>
</dbReference>
<dbReference type="SUPFAM" id="SSF56214">
    <property type="entry name" value="4'-phosphopantetheinyl transferase"/>
    <property type="match status" value="1"/>
</dbReference>